<feature type="initiator methionine" description="Removed" evidence="1">
    <location>
        <position position="1"/>
    </location>
</feature>
<feature type="chain" id="PRO_0000139643" description="Amidophosphoribosyltransferase">
    <location>
        <begin position="2"/>
        <end position="457"/>
    </location>
</feature>
<feature type="domain" description="Glutamine amidotransferase type-2" evidence="2">
    <location>
        <begin position="2"/>
        <end position="223"/>
    </location>
</feature>
<feature type="active site" description="Nucleophile" evidence="2">
    <location>
        <position position="2"/>
    </location>
</feature>
<feature type="binding site" evidence="2">
    <location>
        <position position="239"/>
    </location>
    <ligand>
        <name>[4Fe-4S] cluster</name>
        <dbReference type="ChEBI" id="CHEBI:49883"/>
    </ligand>
</feature>
<feature type="binding site" evidence="2">
    <location>
        <position position="286"/>
    </location>
    <ligand>
        <name>Mg(2+)</name>
        <dbReference type="ChEBI" id="CHEBI:18420"/>
    </ligand>
</feature>
<feature type="binding site" evidence="2">
    <location>
        <position position="348"/>
    </location>
    <ligand>
        <name>Mg(2+)</name>
        <dbReference type="ChEBI" id="CHEBI:18420"/>
    </ligand>
</feature>
<feature type="binding site" evidence="2">
    <location>
        <position position="349"/>
    </location>
    <ligand>
        <name>Mg(2+)</name>
        <dbReference type="ChEBI" id="CHEBI:18420"/>
    </ligand>
</feature>
<feature type="binding site" evidence="2">
    <location>
        <position position="385"/>
    </location>
    <ligand>
        <name>[4Fe-4S] cluster</name>
        <dbReference type="ChEBI" id="CHEBI:49883"/>
    </ligand>
</feature>
<feature type="binding site" evidence="2">
    <location>
        <position position="438"/>
    </location>
    <ligand>
        <name>[4Fe-4S] cluster</name>
        <dbReference type="ChEBI" id="CHEBI:49883"/>
    </ligand>
</feature>
<feature type="binding site" evidence="2">
    <location>
        <position position="441"/>
    </location>
    <ligand>
        <name>[4Fe-4S] cluster</name>
        <dbReference type="ChEBI" id="CHEBI:49883"/>
    </ligand>
</feature>
<gene>
    <name evidence="2" type="primary">purF</name>
    <name type="ordered locus">AF_0873</name>
</gene>
<accession>O29388</accession>
<organism>
    <name type="scientific">Archaeoglobus fulgidus (strain ATCC 49558 / DSM 4304 / JCM 9628 / NBRC 100126 / VC-16)</name>
    <dbReference type="NCBI Taxonomy" id="224325"/>
    <lineage>
        <taxon>Archaea</taxon>
        <taxon>Methanobacteriati</taxon>
        <taxon>Methanobacteriota</taxon>
        <taxon>Archaeoglobi</taxon>
        <taxon>Archaeoglobales</taxon>
        <taxon>Archaeoglobaceae</taxon>
        <taxon>Archaeoglobus</taxon>
    </lineage>
</organism>
<protein>
    <recommendedName>
        <fullName evidence="2">Amidophosphoribosyltransferase</fullName>
        <shortName evidence="2">ATase</shortName>
        <ecNumber evidence="2">2.4.2.14</ecNumber>
    </recommendedName>
    <alternativeName>
        <fullName evidence="2">Glutamine phosphoribosylpyrophosphate amidotransferase</fullName>
        <shortName evidence="2">GPATase</shortName>
    </alternativeName>
</protein>
<name>PUR1_ARCFU</name>
<keyword id="KW-0004">4Fe-4S</keyword>
<keyword id="KW-0315">Glutamine amidotransferase</keyword>
<keyword id="KW-0328">Glycosyltransferase</keyword>
<keyword id="KW-0408">Iron</keyword>
<keyword id="KW-0411">Iron-sulfur</keyword>
<keyword id="KW-0460">Magnesium</keyword>
<keyword id="KW-0479">Metal-binding</keyword>
<keyword id="KW-0658">Purine biosynthesis</keyword>
<keyword id="KW-1185">Reference proteome</keyword>
<keyword id="KW-0808">Transferase</keyword>
<comment type="function">
    <text evidence="2">Catalyzes the formation of phosphoribosylamine from phosphoribosylpyrophosphate (PRPP) and glutamine.</text>
</comment>
<comment type="catalytic activity">
    <reaction evidence="2">
        <text>5-phospho-beta-D-ribosylamine + L-glutamate + diphosphate = 5-phospho-alpha-D-ribose 1-diphosphate + L-glutamine + H2O</text>
        <dbReference type="Rhea" id="RHEA:14905"/>
        <dbReference type="ChEBI" id="CHEBI:15377"/>
        <dbReference type="ChEBI" id="CHEBI:29985"/>
        <dbReference type="ChEBI" id="CHEBI:33019"/>
        <dbReference type="ChEBI" id="CHEBI:58017"/>
        <dbReference type="ChEBI" id="CHEBI:58359"/>
        <dbReference type="ChEBI" id="CHEBI:58681"/>
        <dbReference type="EC" id="2.4.2.14"/>
    </reaction>
</comment>
<comment type="cofactor">
    <cofactor evidence="2">
        <name>Mg(2+)</name>
        <dbReference type="ChEBI" id="CHEBI:18420"/>
    </cofactor>
    <text evidence="2">Binds 1 Mg(2+) ion per subunit.</text>
</comment>
<comment type="cofactor">
    <cofactor evidence="2">
        <name>[4Fe-4S] cluster</name>
        <dbReference type="ChEBI" id="CHEBI:49883"/>
    </cofactor>
    <text evidence="2">Binds 1 [4Fe-4S] cluster per subunit.</text>
</comment>
<comment type="pathway">
    <text evidence="2">Purine metabolism; IMP biosynthesis via de novo pathway; N(1)-(5-phospho-D-ribosyl)glycinamide from 5-phospho-alpha-D-ribose 1-diphosphate: step 1/2.</text>
</comment>
<comment type="similarity">
    <text evidence="2">In the C-terminal section; belongs to the purine/pyrimidine phosphoribosyltransferase family.</text>
</comment>
<dbReference type="EC" id="2.4.2.14" evidence="2"/>
<dbReference type="EMBL" id="AE000782">
    <property type="protein sequence ID" value="AAB90366.1"/>
    <property type="molecule type" value="Genomic_DNA"/>
</dbReference>
<dbReference type="PIR" id="A69359">
    <property type="entry name" value="A69359"/>
</dbReference>
<dbReference type="RefSeq" id="WP_010878374.1">
    <property type="nucleotide sequence ID" value="NC_000917.1"/>
</dbReference>
<dbReference type="SMR" id="O29388"/>
<dbReference type="STRING" id="224325.AF_0873"/>
<dbReference type="MEROPS" id="C44.001"/>
<dbReference type="PaxDb" id="224325-AF_0873"/>
<dbReference type="EnsemblBacteria" id="AAB90366">
    <property type="protein sequence ID" value="AAB90366"/>
    <property type="gene ID" value="AF_0873"/>
</dbReference>
<dbReference type="GeneID" id="1484093"/>
<dbReference type="KEGG" id="afu:AF_0873"/>
<dbReference type="eggNOG" id="arCOG00093">
    <property type="taxonomic scope" value="Archaea"/>
</dbReference>
<dbReference type="HOGENOM" id="CLU_022389_3_1_2"/>
<dbReference type="OrthoDB" id="5976at2157"/>
<dbReference type="PhylomeDB" id="O29388"/>
<dbReference type="UniPathway" id="UPA00074">
    <property type="reaction ID" value="UER00124"/>
</dbReference>
<dbReference type="Proteomes" id="UP000002199">
    <property type="component" value="Chromosome"/>
</dbReference>
<dbReference type="GO" id="GO:0051539">
    <property type="term" value="F:4 iron, 4 sulfur cluster binding"/>
    <property type="evidence" value="ECO:0007669"/>
    <property type="project" value="UniProtKB-KW"/>
</dbReference>
<dbReference type="GO" id="GO:0004044">
    <property type="term" value="F:amidophosphoribosyltransferase activity"/>
    <property type="evidence" value="ECO:0007669"/>
    <property type="project" value="UniProtKB-UniRule"/>
</dbReference>
<dbReference type="GO" id="GO:0000287">
    <property type="term" value="F:magnesium ion binding"/>
    <property type="evidence" value="ECO:0007669"/>
    <property type="project" value="UniProtKB-UniRule"/>
</dbReference>
<dbReference type="GO" id="GO:0006189">
    <property type="term" value="P:'de novo' IMP biosynthetic process"/>
    <property type="evidence" value="ECO:0007669"/>
    <property type="project" value="UniProtKB-UniRule"/>
</dbReference>
<dbReference type="GO" id="GO:0009113">
    <property type="term" value="P:purine nucleobase biosynthetic process"/>
    <property type="evidence" value="ECO:0007669"/>
    <property type="project" value="InterPro"/>
</dbReference>
<dbReference type="CDD" id="cd00715">
    <property type="entry name" value="GPATase_N"/>
    <property type="match status" value="1"/>
</dbReference>
<dbReference type="CDD" id="cd06223">
    <property type="entry name" value="PRTases_typeI"/>
    <property type="match status" value="1"/>
</dbReference>
<dbReference type="Gene3D" id="3.40.50.2020">
    <property type="match status" value="1"/>
</dbReference>
<dbReference type="Gene3D" id="3.60.20.10">
    <property type="entry name" value="Glutamine Phosphoribosylpyrophosphate, subunit 1, domain 1"/>
    <property type="match status" value="1"/>
</dbReference>
<dbReference type="HAMAP" id="MF_01931">
    <property type="entry name" value="PurF"/>
    <property type="match status" value="1"/>
</dbReference>
<dbReference type="InterPro" id="IPR017932">
    <property type="entry name" value="GATase_2_dom"/>
</dbReference>
<dbReference type="InterPro" id="IPR029055">
    <property type="entry name" value="Ntn_hydrolases_N"/>
</dbReference>
<dbReference type="InterPro" id="IPR000836">
    <property type="entry name" value="PRibTrfase_dom"/>
</dbReference>
<dbReference type="InterPro" id="IPR029057">
    <property type="entry name" value="PRTase-like"/>
</dbReference>
<dbReference type="InterPro" id="IPR005854">
    <property type="entry name" value="PurF"/>
</dbReference>
<dbReference type="InterPro" id="IPR035584">
    <property type="entry name" value="PurF_N"/>
</dbReference>
<dbReference type="NCBIfam" id="TIGR01134">
    <property type="entry name" value="purF"/>
    <property type="match status" value="1"/>
</dbReference>
<dbReference type="PANTHER" id="PTHR11907">
    <property type="entry name" value="AMIDOPHOSPHORIBOSYLTRANSFERASE"/>
    <property type="match status" value="1"/>
</dbReference>
<dbReference type="Pfam" id="PF13522">
    <property type="entry name" value="GATase_6"/>
    <property type="match status" value="1"/>
</dbReference>
<dbReference type="Pfam" id="PF00156">
    <property type="entry name" value="Pribosyltran"/>
    <property type="match status" value="1"/>
</dbReference>
<dbReference type="PIRSF" id="PIRSF000485">
    <property type="entry name" value="Amd_phspho_trans"/>
    <property type="match status" value="1"/>
</dbReference>
<dbReference type="SUPFAM" id="SSF56235">
    <property type="entry name" value="N-terminal nucleophile aminohydrolases (Ntn hydrolases)"/>
    <property type="match status" value="1"/>
</dbReference>
<dbReference type="SUPFAM" id="SSF53271">
    <property type="entry name" value="PRTase-like"/>
    <property type="match status" value="1"/>
</dbReference>
<dbReference type="PROSITE" id="PS51278">
    <property type="entry name" value="GATASE_TYPE_2"/>
    <property type="match status" value="1"/>
</dbReference>
<dbReference type="PROSITE" id="PS00103">
    <property type="entry name" value="PUR_PYR_PR_TRANSFER"/>
    <property type="match status" value="1"/>
</dbReference>
<proteinExistence type="inferred from homology"/>
<sequence>MCGVVGIYHPDGELAPRLAYYSLFSLQHRGQESAGIASFDNHIRQKRGMGLVTEVFNDEDFELLAGKSVIGHVRYSTTGRSRLENAQPFVVKSKAGYIAVAHNGNLVNYSQLRNELENEGRVFTTDSDTEVISQLLSKFLIEEGDIINALERLNESLVGSYTMTMLVDDAVIGYRDPLGFKPLCVGRIDDGYVICSESCAIDALGGEFIRDVQPGKAAIIKDGELEFVKIAKSERRAVCIFEYIYFARPDSIIDGISVYKARSEMGKVLARESPVEADFVSAVPDSGITAAIGYAQESGLPYFEGLIKNRYVGRTFIMPVQSLRETSVRLKVNVVRENVRGRRVVLVDDSIVRGTTSRRIVQMIKDAGAKEVHMRIGSPPIIAPCYFGIDMKSREELIAASHTVEEIGRIFGTDSLAYLSLEGLLEAVRRAGGKRGYCLACLTSKYPVSVPGEECEC</sequence>
<reference key="1">
    <citation type="journal article" date="1997" name="Nature">
        <title>The complete genome sequence of the hyperthermophilic, sulphate-reducing archaeon Archaeoglobus fulgidus.</title>
        <authorList>
            <person name="Klenk H.-P."/>
            <person name="Clayton R.A."/>
            <person name="Tomb J.-F."/>
            <person name="White O."/>
            <person name="Nelson K.E."/>
            <person name="Ketchum K.A."/>
            <person name="Dodson R.J."/>
            <person name="Gwinn M.L."/>
            <person name="Hickey E.K."/>
            <person name="Peterson J.D."/>
            <person name="Richardson D.L."/>
            <person name="Kerlavage A.R."/>
            <person name="Graham D.E."/>
            <person name="Kyrpides N.C."/>
            <person name="Fleischmann R.D."/>
            <person name="Quackenbush J."/>
            <person name="Lee N.H."/>
            <person name="Sutton G.G."/>
            <person name="Gill S.R."/>
            <person name="Kirkness E.F."/>
            <person name="Dougherty B.A."/>
            <person name="McKenney K."/>
            <person name="Adams M.D."/>
            <person name="Loftus B.J."/>
            <person name="Peterson S.N."/>
            <person name="Reich C.I."/>
            <person name="McNeil L.K."/>
            <person name="Badger J.H."/>
            <person name="Glodek A."/>
            <person name="Zhou L."/>
            <person name="Overbeek R."/>
            <person name="Gocayne J.D."/>
            <person name="Weidman J.F."/>
            <person name="McDonald L.A."/>
            <person name="Utterback T.R."/>
            <person name="Cotton M.D."/>
            <person name="Spriggs T."/>
            <person name="Artiach P."/>
            <person name="Kaine B.P."/>
            <person name="Sykes S.M."/>
            <person name="Sadow P.W."/>
            <person name="D'Andrea K.P."/>
            <person name="Bowman C."/>
            <person name="Fujii C."/>
            <person name="Garland S.A."/>
            <person name="Mason T.M."/>
            <person name="Olsen G.J."/>
            <person name="Fraser C.M."/>
            <person name="Smith H.O."/>
            <person name="Woese C.R."/>
            <person name="Venter J.C."/>
        </authorList>
    </citation>
    <scope>NUCLEOTIDE SEQUENCE [LARGE SCALE GENOMIC DNA]</scope>
    <source>
        <strain>ATCC 49558 / DSM 4304 / JCM 9628 / NBRC 100126 / VC-16</strain>
    </source>
</reference>
<evidence type="ECO:0000250" key="1"/>
<evidence type="ECO:0000255" key="2">
    <source>
        <dbReference type="HAMAP-Rule" id="MF_01931"/>
    </source>
</evidence>